<gene>
    <name evidence="1" type="primary">rraA</name>
    <name type="ordered locus">IL2455</name>
</gene>
<proteinExistence type="inferred from homology"/>
<dbReference type="EMBL" id="AE017340">
    <property type="protein sequence ID" value="AAV83287.1"/>
    <property type="molecule type" value="Genomic_DNA"/>
</dbReference>
<dbReference type="RefSeq" id="WP_011235680.1">
    <property type="nucleotide sequence ID" value="NC_006512.1"/>
</dbReference>
<dbReference type="SMR" id="Q5QV38"/>
<dbReference type="STRING" id="283942.IL2455"/>
<dbReference type="GeneID" id="41337649"/>
<dbReference type="KEGG" id="ilo:IL2455"/>
<dbReference type="eggNOG" id="COG0684">
    <property type="taxonomic scope" value="Bacteria"/>
</dbReference>
<dbReference type="HOGENOM" id="CLU_072626_4_0_6"/>
<dbReference type="OrthoDB" id="943692at2"/>
<dbReference type="Proteomes" id="UP000001171">
    <property type="component" value="Chromosome"/>
</dbReference>
<dbReference type="GO" id="GO:0005737">
    <property type="term" value="C:cytoplasm"/>
    <property type="evidence" value="ECO:0007669"/>
    <property type="project" value="UniProtKB-SubCell"/>
</dbReference>
<dbReference type="GO" id="GO:0060698">
    <property type="term" value="F:endoribonuclease inhibitor activity"/>
    <property type="evidence" value="ECO:0007669"/>
    <property type="project" value="UniProtKB-UniRule"/>
</dbReference>
<dbReference type="GO" id="GO:0019899">
    <property type="term" value="F:enzyme binding"/>
    <property type="evidence" value="ECO:0007669"/>
    <property type="project" value="UniProtKB-UniRule"/>
</dbReference>
<dbReference type="GO" id="GO:0051252">
    <property type="term" value="P:regulation of RNA metabolic process"/>
    <property type="evidence" value="ECO:0007669"/>
    <property type="project" value="InterPro"/>
</dbReference>
<dbReference type="CDD" id="cd16841">
    <property type="entry name" value="RraA_family"/>
    <property type="match status" value="1"/>
</dbReference>
<dbReference type="Gene3D" id="3.50.30.40">
    <property type="entry name" value="Ribonuclease E inhibitor RraA/RraA-like"/>
    <property type="match status" value="1"/>
</dbReference>
<dbReference type="HAMAP" id="MF_00471">
    <property type="entry name" value="RraA"/>
    <property type="match status" value="1"/>
</dbReference>
<dbReference type="InterPro" id="IPR010203">
    <property type="entry name" value="RraA"/>
</dbReference>
<dbReference type="InterPro" id="IPR005493">
    <property type="entry name" value="RraA/RraA-like"/>
</dbReference>
<dbReference type="InterPro" id="IPR036704">
    <property type="entry name" value="RraA/RraA-like_sf"/>
</dbReference>
<dbReference type="InterPro" id="IPR014339">
    <property type="entry name" value="RraA_gpbac"/>
</dbReference>
<dbReference type="NCBIfam" id="TIGR01935">
    <property type="entry name" value="NOT-MenG"/>
    <property type="match status" value="1"/>
</dbReference>
<dbReference type="NCBIfam" id="NF006875">
    <property type="entry name" value="PRK09372.1"/>
    <property type="match status" value="1"/>
</dbReference>
<dbReference type="NCBIfam" id="TIGR02998">
    <property type="entry name" value="RraA_entero"/>
    <property type="match status" value="1"/>
</dbReference>
<dbReference type="PANTHER" id="PTHR33254">
    <property type="entry name" value="4-HYDROXY-4-METHYL-2-OXOGLUTARATE ALDOLASE 3-RELATED"/>
    <property type="match status" value="1"/>
</dbReference>
<dbReference type="PANTHER" id="PTHR33254:SF29">
    <property type="entry name" value="REGULATOR OF RIBONUCLEASE ACTIVITY A"/>
    <property type="match status" value="1"/>
</dbReference>
<dbReference type="Pfam" id="PF03737">
    <property type="entry name" value="RraA-like"/>
    <property type="match status" value="1"/>
</dbReference>
<dbReference type="SUPFAM" id="SSF89562">
    <property type="entry name" value="RraA-like"/>
    <property type="match status" value="1"/>
</dbReference>
<reference key="1">
    <citation type="journal article" date="2004" name="Proc. Natl. Acad. Sci. U.S.A.">
        <title>Genome sequence of the deep-sea gamma-proteobacterium Idiomarina loihiensis reveals amino acid fermentation as a source of carbon and energy.</title>
        <authorList>
            <person name="Hou S."/>
            <person name="Saw J.H."/>
            <person name="Lee K.S."/>
            <person name="Freitas T.A."/>
            <person name="Belisle C."/>
            <person name="Kawarabayasi Y."/>
            <person name="Donachie S.P."/>
            <person name="Pikina A."/>
            <person name="Galperin M.Y."/>
            <person name="Koonin E.V."/>
            <person name="Makarova K.S."/>
            <person name="Omelchenko M.V."/>
            <person name="Sorokin A."/>
            <person name="Wolf Y.I."/>
            <person name="Li Q.X."/>
            <person name="Keum Y.S."/>
            <person name="Campbell S."/>
            <person name="Denery J."/>
            <person name="Aizawa S."/>
            <person name="Shibata S."/>
            <person name="Malahoff A."/>
            <person name="Alam M."/>
        </authorList>
    </citation>
    <scope>NUCLEOTIDE SEQUENCE [LARGE SCALE GENOMIC DNA]</scope>
    <source>
        <strain>ATCC BAA-735 / DSM 15497 / L2-TR</strain>
    </source>
</reference>
<comment type="function">
    <text evidence="1">Globally modulates RNA abundance by binding to RNase E (Rne) and regulating its endonucleolytic activity. Can modulate Rne action in a substrate-dependent manner by altering the composition of the degradosome. Modulates RNA-binding and helicase activities of the degradosome.</text>
</comment>
<comment type="subunit">
    <text evidence="1">Homotrimer. Binds to both RNA-binding sites in the C-terminal region of Rne and to RhlB.</text>
</comment>
<comment type="subcellular location">
    <subcellularLocation>
        <location evidence="1">Cytoplasm</location>
    </subcellularLocation>
</comment>
<comment type="similarity">
    <text evidence="1">Belongs to the RraA family.</text>
</comment>
<sequence>MEYNTSELCDLYPDMVDVVEPMFESYGGRSSFGGSLVIIKCHEDKGLIEETIAADGGGKILLIDGGGSSRRALVDAAIAEQAMDNDWEGIVCYGAVREVDALEELDIGILGVASIPVGAISEGVGELNVPVNFGGVTFLPEDHLYIDTTGVILSPEPLDIE</sequence>
<name>RRAA_IDILO</name>
<organism>
    <name type="scientific">Idiomarina loihiensis (strain ATCC BAA-735 / DSM 15497 / L2-TR)</name>
    <dbReference type="NCBI Taxonomy" id="283942"/>
    <lineage>
        <taxon>Bacteria</taxon>
        <taxon>Pseudomonadati</taxon>
        <taxon>Pseudomonadota</taxon>
        <taxon>Gammaproteobacteria</taxon>
        <taxon>Alteromonadales</taxon>
        <taxon>Idiomarinaceae</taxon>
        <taxon>Idiomarina</taxon>
    </lineage>
</organism>
<feature type="chain" id="PRO_0000209617" description="Regulator of ribonuclease activity A">
    <location>
        <begin position="1"/>
        <end position="161"/>
    </location>
</feature>
<keyword id="KW-0963">Cytoplasm</keyword>
<keyword id="KW-1185">Reference proteome</keyword>
<evidence type="ECO:0000255" key="1">
    <source>
        <dbReference type="HAMAP-Rule" id="MF_00471"/>
    </source>
</evidence>
<protein>
    <recommendedName>
        <fullName evidence="1">Regulator of ribonuclease activity A</fullName>
    </recommendedName>
</protein>
<accession>Q5QV38</accession>